<keyword id="KW-0378">Hydrolase</keyword>
<keyword id="KW-0464">Manganese</keyword>
<keyword id="KW-0479">Metal-binding</keyword>
<keyword id="KW-1185">Reference proteome</keyword>
<gene>
    <name type="ordered locus">SERP1271</name>
</gene>
<name>Y1271_STAEQ</name>
<feature type="chain" id="PRO_0000299428" description="Uncharacterized peptidase SERP1271">
    <location>
        <begin position="1"/>
        <end position="351"/>
    </location>
</feature>
<feature type="binding site" evidence="1">
    <location>
        <position position="215"/>
    </location>
    <ligand>
        <name>Mn(2+)</name>
        <dbReference type="ChEBI" id="CHEBI:29035"/>
        <label>2</label>
    </ligand>
</feature>
<feature type="binding site" evidence="1">
    <location>
        <position position="226"/>
    </location>
    <ligand>
        <name>Mn(2+)</name>
        <dbReference type="ChEBI" id="CHEBI:29035"/>
        <label>1</label>
    </ligand>
</feature>
<feature type="binding site" evidence="1">
    <location>
        <position position="226"/>
    </location>
    <ligand>
        <name>Mn(2+)</name>
        <dbReference type="ChEBI" id="CHEBI:29035"/>
        <label>2</label>
    </ligand>
</feature>
<feature type="binding site" evidence="1">
    <location>
        <position position="290"/>
    </location>
    <ligand>
        <name>Mn(2+)</name>
        <dbReference type="ChEBI" id="CHEBI:29035"/>
        <label>1</label>
    </ligand>
</feature>
<feature type="binding site" evidence="1">
    <location>
        <position position="319"/>
    </location>
    <ligand>
        <name>Mn(2+)</name>
        <dbReference type="ChEBI" id="CHEBI:29035"/>
        <label>1</label>
    </ligand>
</feature>
<feature type="binding site" evidence="1">
    <location>
        <position position="333"/>
    </location>
    <ligand>
        <name>Mn(2+)</name>
        <dbReference type="ChEBI" id="CHEBI:29035"/>
        <label>1</label>
    </ligand>
</feature>
<feature type="binding site" evidence="1">
    <location>
        <position position="333"/>
    </location>
    <ligand>
        <name>Mn(2+)</name>
        <dbReference type="ChEBI" id="CHEBI:29035"/>
        <label>2</label>
    </ligand>
</feature>
<evidence type="ECO:0000255" key="1"/>
<evidence type="ECO:0000305" key="2"/>
<comment type="cofactor">
    <cofactor evidence="2">
        <name>Mn(2+)</name>
        <dbReference type="ChEBI" id="CHEBI:29035"/>
    </cofactor>
    <text evidence="2">Binds 2 manganese ions per subunit.</text>
</comment>
<comment type="similarity">
    <text evidence="2">Belongs to the peptidase M24B family.</text>
</comment>
<reference key="1">
    <citation type="journal article" date="2005" name="J. Bacteriol.">
        <title>Insights on evolution of virulence and resistance from the complete genome analysis of an early methicillin-resistant Staphylococcus aureus strain and a biofilm-producing methicillin-resistant Staphylococcus epidermidis strain.</title>
        <authorList>
            <person name="Gill S.R."/>
            <person name="Fouts D.E."/>
            <person name="Archer G.L."/>
            <person name="Mongodin E.F."/>
            <person name="DeBoy R.T."/>
            <person name="Ravel J."/>
            <person name="Paulsen I.T."/>
            <person name="Kolonay J.F."/>
            <person name="Brinkac L.M."/>
            <person name="Beanan M.J."/>
            <person name="Dodson R.J."/>
            <person name="Daugherty S.C."/>
            <person name="Madupu R."/>
            <person name="Angiuoli S.V."/>
            <person name="Durkin A.S."/>
            <person name="Haft D.H."/>
            <person name="Vamathevan J.J."/>
            <person name="Khouri H."/>
            <person name="Utterback T.R."/>
            <person name="Lee C."/>
            <person name="Dimitrov G."/>
            <person name="Jiang L."/>
            <person name="Qin H."/>
            <person name="Weidman J."/>
            <person name="Tran K."/>
            <person name="Kang K.H."/>
            <person name="Hance I.R."/>
            <person name="Nelson K.E."/>
            <person name="Fraser C.M."/>
        </authorList>
    </citation>
    <scope>NUCLEOTIDE SEQUENCE [LARGE SCALE GENOMIC DNA]</scope>
    <source>
        <strain>ATCC 35984 / DSM 28319 / BCRC 17069 / CCUG 31568 / BM 3577 / RP62A</strain>
    </source>
</reference>
<organism>
    <name type="scientific">Staphylococcus epidermidis (strain ATCC 35984 / DSM 28319 / BCRC 17069 / CCUG 31568 / BM 3577 / RP62A)</name>
    <dbReference type="NCBI Taxonomy" id="176279"/>
    <lineage>
        <taxon>Bacteria</taxon>
        <taxon>Bacillati</taxon>
        <taxon>Bacillota</taxon>
        <taxon>Bacilli</taxon>
        <taxon>Bacillales</taxon>
        <taxon>Staphylococcaceae</taxon>
        <taxon>Staphylococcus</taxon>
    </lineage>
</organism>
<protein>
    <recommendedName>
        <fullName>Uncharacterized peptidase SERP1271</fullName>
        <ecNumber>3.4.-.-</ecNumber>
    </recommendedName>
</protein>
<proteinExistence type="inferred from homology"/>
<accession>Q5HNJ7</accession>
<sequence length="351" mass="40184">MTKIKEIKKVLQQEDADAAWITTPLNIFYFTGYRSEPHERLFALLIPSNEEPVLFCPKMEVEEVKQSPFKGKIIGYLDTENPFDKYSKTFSKMLIESEHLTVKRQRELTKAFNIEHYQDVDQSIKDLRNIKSEDEIINIKKAAALADKCIEIGKSFLKEGVEEREVVNHIENEIKKYGVNEMSFDTMVLFGDHAASPHGTPGDRKLQQNEFVLFDLGVVYHHYCSDMTRTIHFGTPNKEAQNIYNIVLKAETEAIKSIKPGVTIKDIDKIARDIIEEAGYGDYFPHRLGHGLGLEEHEYQDISSVNNNQLEAGMVITIEPGIYVPHVAGVRIEDDILVTENGYEILTQYEK</sequence>
<dbReference type="EC" id="3.4.-.-"/>
<dbReference type="EMBL" id="CP000029">
    <property type="protein sequence ID" value="AAW54659.1"/>
    <property type="molecule type" value="Genomic_DNA"/>
</dbReference>
<dbReference type="RefSeq" id="WP_001830888.1">
    <property type="nucleotide sequence ID" value="NC_002976.3"/>
</dbReference>
<dbReference type="SMR" id="Q5HNJ7"/>
<dbReference type="STRING" id="176279.SERP1271"/>
<dbReference type="KEGG" id="ser:SERP1271"/>
<dbReference type="eggNOG" id="COG0006">
    <property type="taxonomic scope" value="Bacteria"/>
</dbReference>
<dbReference type="HOGENOM" id="CLU_017266_4_2_9"/>
<dbReference type="Proteomes" id="UP000000531">
    <property type="component" value="Chromosome"/>
</dbReference>
<dbReference type="GO" id="GO:0016787">
    <property type="term" value="F:hydrolase activity"/>
    <property type="evidence" value="ECO:0007669"/>
    <property type="project" value="UniProtKB-KW"/>
</dbReference>
<dbReference type="GO" id="GO:0046872">
    <property type="term" value="F:metal ion binding"/>
    <property type="evidence" value="ECO:0007669"/>
    <property type="project" value="UniProtKB-KW"/>
</dbReference>
<dbReference type="CDD" id="cd01092">
    <property type="entry name" value="APP-like"/>
    <property type="match status" value="1"/>
</dbReference>
<dbReference type="FunFam" id="3.90.230.10:FF:000014">
    <property type="entry name" value="Aminopeptidase P family protein"/>
    <property type="match status" value="1"/>
</dbReference>
<dbReference type="Gene3D" id="3.90.230.10">
    <property type="entry name" value="Creatinase/methionine aminopeptidase superfamily"/>
    <property type="match status" value="1"/>
</dbReference>
<dbReference type="Gene3D" id="3.40.350.10">
    <property type="entry name" value="Creatinase/prolidase N-terminal domain"/>
    <property type="match status" value="1"/>
</dbReference>
<dbReference type="InterPro" id="IPR029149">
    <property type="entry name" value="Creatin/AminoP/Spt16_N"/>
</dbReference>
<dbReference type="InterPro" id="IPR036005">
    <property type="entry name" value="Creatinase/aminopeptidase-like"/>
</dbReference>
<dbReference type="InterPro" id="IPR000587">
    <property type="entry name" value="Creatinase_N"/>
</dbReference>
<dbReference type="InterPro" id="IPR000994">
    <property type="entry name" value="Pept_M24"/>
</dbReference>
<dbReference type="InterPro" id="IPR050659">
    <property type="entry name" value="Peptidase_M24B"/>
</dbReference>
<dbReference type="InterPro" id="IPR001131">
    <property type="entry name" value="Peptidase_M24B_aminopep-P_CS"/>
</dbReference>
<dbReference type="PANTHER" id="PTHR46112">
    <property type="entry name" value="AMINOPEPTIDASE"/>
    <property type="match status" value="1"/>
</dbReference>
<dbReference type="PANTHER" id="PTHR46112:SF10">
    <property type="entry name" value="DIPEPTIDASE YKVY-RELATED"/>
    <property type="match status" value="1"/>
</dbReference>
<dbReference type="Pfam" id="PF01321">
    <property type="entry name" value="Creatinase_N"/>
    <property type="match status" value="1"/>
</dbReference>
<dbReference type="Pfam" id="PF00557">
    <property type="entry name" value="Peptidase_M24"/>
    <property type="match status" value="1"/>
</dbReference>
<dbReference type="SUPFAM" id="SSF55920">
    <property type="entry name" value="Creatinase/aminopeptidase"/>
    <property type="match status" value="1"/>
</dbReference>
<dbReference type="SUPFAM" id="SSF53092">
    <property type="entry name" value="Creatinase/prolidase N-terminal domain"/>
    <property type="match status" value="1"/>
</dbReference>
<dbReference type="PROSITE" id="PS00491">
    <property type="entry name" value="PROLINE_PEPTIDASE"/>
    <property type="match status" value="1"/>
</dbReference>